<proteinExistence type="evidence at transcript level"/>
<gene>
    <name type="primary">NCEH1</name>
    <name type="synonym">AADACL1</name>
</gene>
<organism>
    <name type="scientific">Pongo abelii</name>
    <name type="common">Sumatran orangutan</name>
    <name type="synonym">Pongo pygmaeus abelii</name>
    <dbReference type="NCBI Taxonomy" id="9601"/>
    <lineage>
        <taxon>Eukaryota</taxon>
        <taxon>Metazoa</taxon>
        <taxon>Chordata</taxon>
        <taxon>Craniata</taxon>
        <taxon>Vertebrata</taxon>
        <taxon>Euteleostomi</taxon>
        <taxon>Mammalia</taxon>
        <taxon>Eutheria</taxon>
        <taxon>Euarchontoglires</taxon>
        <taxon>Primates</taxon>
        <taxon>Haplorrhini</taxon>
        <taxon>Catarrhini</taxon>
        <taxon>Hominidae</taxon>
        <taxon>Pongo</taxon>
    </lineage>
</organism>
<name>NCEH1_PONAB</name>
<comment type="function">
    <text evidence="3">Hydrolyzes 2-acetyl monoalkylglycerol ether (1-O-alkyl-2-acetyl-sn-glycerol), the penultimate precursor of the pathway for de novo synthesis of platelet-activating factor (By similarity). May be responsible for the hydrolysis of cholesterol esters (such as cholesteryl (9Z-octadecenoate)) in macrophages (By similarity). Also involved in organ detoxification by hydrolyzing exogenous organophosphorus compounds (By similarity).</text>
</comment>
<comment type="catalytic activity">
    <reaction evidence="2">
        <text>a 1-O-alkyl-2-acetyl-sn-glycerol + H2O = a 1-O-alkyl-sn-glycerol + acetate + H(+)</text>
        <dbReference type="Rhea" id="RHEA:11552"/>
        <dbReference type="ChEBI" id="CHEBI:15377"/>
        <dbReference type="ChEBI" id="CHEBI:15378"/>
        <dbReference type="ChEBI" id="CHEBI:15850"/>
        <dbReference type="ChEBI" id="CHEBI:16291"/>
        <dbReference type="ChEBI" id="CHEBI:30089"/>
        <dbReference type="EC" id="3.1.1.71"/>
    </reaction>
    <physiologicalReaction direction="left-to-right" evidence="2">
        <dbReference type="Rhea" id="RHEA:11553"/>
    </physiologicalReaction>
</comment>
<comment type="catalytic activity">
    <reaction evidence="3">
        <text>1-O-hexadecyl-2-acetyl-sn-glycerol + H2O = 1-O-hexadecyl-sn-glycerol + acetate + H(+)</text>
        <dbReference type="Rhea" id="RHEA:38563"/>
        <dbReference type="ChEBI" id="CHEBI:15377"/>
        <dbReference type="ChEBI" id="CHEBI:15378"/>
        <dbReference type="ChEBI" id="CHEBI:30089"/>
        <dbReference type="ChEBI" id="CHEBI:34115"/>
        <dbReference type="ChEBI" id="CHEBI:75936"/>
    </reaction>
    <physiologicalReaction direction="left-to-right" evidence="3">
        <dbReference type="Rhea" id="RHEA:38564"/>
    </physiologicalReaction>
</comment>
<comment type="catalytic activity">
    <reaction evidence="3">
        <text>a cholesterol ester + H2O = cholesterol + a fatty acid + H(+)</text>
        <dbReference type="Rhea" id="RHEA:36403"/>
        <dbReference type="ChEBI" id="CHEBI:15377"/>
        <dbReference type="ChEBI" id="CHEBI:15378"/>
        <dbReference type="ChEBI" id="CHEBI:16113"/>
        <dbReference type="ChEBI" id="CHEBI:17002"/>
        <dbReference type="ChEBI" id="CHEBI:28868"/>
    </reaction>
    <physiologicalReaction direction="left-to-right" evidence="3">
        <dbReference type="Rhea" id="RHEA:36404"/>
    </physiologicalReaction>
</comment>
<comment type="catalytic activity">
    <reaction evidence="3">
        <text>cholesteryl (9Z-octadecenoate) + H2O = cholesterol + (9Z)-octadecenoate + H(+)</text>
        <dbReference type="Rhea" id="RHEA:33875"/>
        <dbReference type="ChEBI" id="CHEBI:15377"/>
        <dbReference type="ChEBI" id="CHEBI:15378"/>
        <dbReference type="ChEBI" id="CHEBI:16113"/>
        <dbReference type="ChEBI" id="CHEBI:30823"/>
        <dbReference type="ChEBI" id="CHEBI:46898"/>
    </reaction>
    <physiologicalReaction direction="left-to-right" evidence="3">
        <dbReference type="Rhea" id="RHEA:33876"/>
    </physiologicalReaction>
</comment>
<comment type="subcellular location">
    <subcellularLocation>
        <location evidence="2">Cell membrane</location>
        <topology evidence="2">Single-pass type II membrane protein</topology>
    </subcellularLocation>
    <subcellularLocation>
        <location evidence="3">Microsome</location>
    </subcellularLocation>
</comment>
<comment type="PTM">
    <text evidence="2">N-glycosylated.</text>
</comment>
<comment type="similarity">
    <text evidence="6">Belongs to the 'GDXG' lipolytic enzyme family.</text>
</comment>
<reference key="1">
    <citation type="submission" date="2004-11" db="EMBL/GenBank/DDBJ databases">
        <authorList>
            <consortium name="The German cDNA consortium"/>
        </authorList>
    </citation>
    <scope>NUCLEOTIDE SEQUENCE [LARGE SCALE MRNA]</scope>
    <source>
        <tissue>Brain cortex</tissue>
    </source>
</reference>
<evidence type="ECO:0000250" key="1">
    <source>
        <dbReference type="UniProtKB" id="Q5NUF3"/>
    </source>
</evidence>
<evidence type="ECO:0000250" key="2">
    <source>
        <dbReference type="UniProtKB" id="Q6PIU2"/>
    </source>
</evidence>
<evidence type="ECO:0000250" key="3">
    <source>
        <dbReference type="UniProtKB" id="Q8BLF1"/>
    </source>
</evidence>
<evidence type="ECO:0000255" key="4"/>
<evidence type="ECO:0000255" key="5">
    <source>
        <dbReference type="PROSITE-ProRule" id="PRU10038"/>
    </source>
</evidence>
<evidence type="ECO:0000305" key="6"/>
<keyword id="KW-1003">Cell membrane</keyword>
<keyword id="KW-0256">Endoplasmic reticulum</keyword>
<keyword id="KW-0325">Glycoprotein</keyword>
<keyword id="KW-0378">Hydrolase</keyword>
<keyword id="KW-0442">Lipid degradation</keyword>
<keyword id="KW-0443">Lipid metabolism</keyword>
<keyword id="KW-0472">Membrane</keyword>
<keyword id="KW-0492">Microsome</keyword>
<keyword id="KW-1185">Reference proteome</keyword>
<keyword id="KW-0735">Signal-anchor</keyword>
<keyword id="KW-0812">Transmembrane</keyword>
<keyword id="KW-1133">Transmembrane helix</keyword>
<sequence length="408" mass="45779">MRSSCVLLTALVALAAYYVYIPLPGSVSDPWKLMLLDATFRGAQQVSNLIHYLGLSHHLLALNFIIVSFGKKSAWSSAQVKVTDTDFDGVEVRVFEGPPKPEEPLKRSVVYIHGGGWALASAKIRYYDELCTAMAEELNAVIVSIEYRLVPKVYFPEQIHDVVRATKYFLKPEVLQKYMVDPGRICISGDSAGGSLAAALGQQFTQDASLKNKLKLQALIYPVLQALDFNTPSYQQNVNTPILPRYVMVKYWVDYFKGNYDFVQAMIVNNHTSLDVEEAAALRARLNWTSLLPASFTKNYKPVVQTTGNARIVQELPQLLDARSAPLIADQAVLQLLPKTYILTCEHDVLRDDGIMYAKRLETAGVEVTLDHFEDGFHGCMIFTSRPTNFSVGIRTRNSYIKWLDQNL</sequence>
<protein>
    <recommendedName>
        <fullName>Neutral cholesterol ester hydrolase 1</fullName>
        <shortName>NCEH</shortName>
        <ecNumber evidence="3">3.1.1.-</ecNumber>
    </recommendedName>
    <alternativeName>
        <fullName evidence="3">Acetylalkylglycerol acetylhydrolase</fullName>
        <shortName evidence="2">2-acetyl MAGE hydrolase</shortName>
        <ecNumber evidence="3">3.1.1.71</ecNumber>
    </alternativeName>
    <alternativeName>
        <fullName>Arylacetamide deacetylase-like 1</fullName>
    </alternativeName>
</protein>
<feature type="chain" id="PRO_0000265941" description="Neutral cholesterol ester hydrolase 1">
    <location>
        <begin position="1"/>
        <end position="408"/>
    </location>
</feature>
<feature type="topological domain" description="Cytoplasmic" evidence="4">
    <location>
        <begin position="1"/>
        <end position="4"/>
    </location>
</feature>
<feature type="transmembrane region" description="Helical; Signal-anchor for type II membrane protein" evidence="4">
    <location>
        <begin position="5"/>
        <end position="25"/>
    </location>
</feature>
<feature type="topological domain" description="Lumenal" evidence="4">
    <location>
        <begin position="26"/>
        <end position="408"/>
    </location>
</feature>
<feature type="short sequence motif" description="Involved in the stabilization of the negatively charged intermediate by the formation of the oxyanion hole" evidence="1">
    <location>
        <begin position="113"/>
        <end position="115"/>
    </location>
</feature>
<feature type="active site" evidence="5">
    <location>
        <position position="191"/>
    </location>
</feature>
<feature type="active site" evidence="5">
    <location>
        <position position="348"/>
    </location>
</feature>
<feature type="active site" evidence="5">
    <location>
        <position position="378"/>
    </location>
</feature>
<feature type="glycosylation site" description="N-linked (GlcNAc...) asparagine" evidence="4">
    <location>
        <position position="270"/>
    </location>
</feature>
<feature type="glycosylation site" description="N-linked (GlcNAc...) asparagine" evidence="4">
    <location>
        <position position="287"/>
    </location>
</feature>
<feature type="glycosylation site" description="N-linked (GlcNAc...) asparagine" evidence="4">
    <location>
        <position position="389"/>
    </location>
</feature>
<accession>Q5R8Y5</accession>
<dbReference type="EC" id="3.1.1.-" evidence="3"/>
<dbReference type="EC" id="3.1.1.71" evidence="3"/>
<dbReference type="EMBL" id="CR859612">
    <property type="protein sequence ID" value="CAH91775.1"/>
    <property type="molecule type" value="mRNA"/>
</dbReference>
<dbReference type="RefSeq" id="NP_001126028.1">
    <property type="nucleotide sequence ID" value="NM_001132556.1"/>
</dbReference>
<dbReference type="SMR" id="Q5R8Y5"/>
<dbReference type="FunCoup" id="Q5R8Y5">
    <property type="interactions" value="652"/>
</dbReference>
<dbReference type="STRING" id="9601.ENSPPYP00000015990"/>
<dbReference type="ESTHER" id="ponab-nceh1">
    <property type="family name" value="Arylacetamide_deacetylase"/>
</dbReference>
<dbReference type="GlyCosmos" id="Q5R8Y5">
    <property type="glycosylation" value="3 sites, No reported glycans"/>
</dbReference>
<dbReference type="GeneID" id="100172976"/>
<dbReference type="KEGG" id="pon:100172976"/>
<dbReference type="CTD" id="57552"/>
<dbReference type="eggNOG" id="KOG1515">
    <property type="taxonomic scope" value="Eukaryota"/>
</dbReference>
<dbReference type="InParanoid" id="Q5R8Y5"/>
<dbReference type="OrthoDB" id="408631at2759"/>
<dbReference type="Proteomes" id="UP000001595">
    <property type="component" value="Unplaced"/>
</dbReference>
<dbReference type="GO" id="GO:0005783">
    <property type="term" value="C:endoplasmic reticulum"/>
    <property type="evidence" value="ECO:0007669"/>
    <property type="project" value="UniProtKB-KW"/>
</dbReference>
<dbReference type="GO" id="GO:0005886">
    <property type="term" value="C:plasma membrane"/>
    <property type="evidence" value="ECO:0007669"/>
    <property type="project" value="UniProtKB-SubCell"/>
</dbReference>
<dbReference type="GO" id="GO:0047378">
    <property type="term" value="F:acetylalkylglycerol acetylhydrolase activity"/>
    <property type="evidence" value="ECO:0007669"/>
    <property type="project" value="RHEA"/>
</dbReference>
<dbReference type="GO" id="GO:0046485">
    <property type="term" value="P:ether lipid metabolic process"/>
    <property type="evidence" value="ECO:0000250"/>
    <property type="project" value="UniProtKB"/>
</dbReference>
<dbReference type="GO" id="GO:0016042">
    <property type="term" value="P:lipid catabolic process"/>
    <property type="evidence" value="ECO:0007669"/>
    <property type="project" value="UniProtKB-KW"/>
</dbReference>
<dbReference type="Gene3D" id="3.40.50.1820">
    <property type="entry name" value="alpha/beta hydrolase"/>
    <property type="match status" value="1"/>
</dbReference>
<dbReference type="InterPro" id="IPR013094">
    <property type="entry name" value="AB_hydrolase_3"/>
</dbReference>
<dbReference type="InterPro" id="IPR029058">
    <property type="entry name" value="AB_hydrolase_fold"/>
</dbReference>
<dbReference type="InterPro" id="IPR017157">
    <property type="entry name" value="Arylacetamide_deacetylase"/>
</dbReference>
<dbReference type="InterPro" id="IPR050300">
    <property type="entry name" value="GDXG_lipolytic_enzyme"/>
</dbReference>
<dbReference type="InterPro" id="IPR033140">
    <property type="entry name" value="Lipase_GDXG_put_SER_AS"/>
</dbReference>
<dbReference type="PANTHER" id="PTHR48081">
    <property type="entry name" value="AB HYDROLASE SUPERFAMILY PROTEIN C4A8.06C"/>
    <property type="match status" value="1"/>
</dbReference>
<dbReference type="PANTHER" id="PTHR48081:SF29">
    <property type="entry name" value="NEUTRAL CHOLESTEROL ESTER HYDROLASE 1"/>
    <property type="match status" value="1"/>
</dbReference>
<dbReference type="Pfam" id="PF07859">
    <property type="entry name" value="Abhydrolase_3"/>
    <property type="match status" value="2"/>
</dbReference>
<dbReference type="PIRSF" id="PIRSF037251">
    <property type="entry name" value="Arylacetamide_deacetylase"/>
    <property type="match status" value="1"/>
</dbReference>
<dbReference type="SUPFAM" id="SSF53474">
    <property type="entry name" value="alpha/beta-Hydrolases"/>
    <property type="match status" value="1"/>
</dbReference>
<dbReference type="PROSITE" id="PS01174">
    <property type="entry name" value="LIPASE_GDXG_SER"/>
    <property type="match status" value="1"/>
</dbReference>